<protein>
    <recommendedName>
        <fullName evidence="1">Shikimate kinase</fullName>
        <shortName evidence="1">SK</shortName>
        <ecNumber evidence="1">2.7.1.71</ecNumber>
    </recommendedName>
</protein>
<name>AROK_BARHE</name>
<feature type="chain" id="PRO_0000237845" description="Shikimate kinase">
    <location>
        <begin position="1"/>
        <end position="210"/>
    </location>
</feature>
<feature type="binding site" evidence="1">
    <location>
        <begin position="34"/>
        <end position="39"/>
    </location>
    <ligand>
        <name>ATP</name>
        <dbReference type="ChEBI" id="CHEBI:30616"/>
    </ligand>
</feature>
<feature type="binding site" evidence="1">
    <location>
        <position position="38"/>
    </location>
    <ligand>
        <name>Mg(2+)</name>
        <dbReference type="ChEBI" id="CHEBI:18420"/>
    </ligand>
</feature>
<feature type="binding site" evidence="1">
    <location>
        <position position="56"/>
    </location>
    <ligand>
        <name>substrate</name>
    </ligand>
</feature>
<feature type="binding site" evidence="1">
    <location>
        <position position="80"/>
    </location>
    <ligand>
        <name>substrate</name>
    </ligand>
</feature>
<feature type="binding site" evidence="1">
    <location>
        <position position="102"/>
    </location>
    <ligand>
        <name>substrate</name>
    </ligand>
</feature>
<feature type="binding site" evidence="1">
    <location>
        <position position="140"/>
    </location>
    <ligand>
        <name>ATP</name>
        <dbReference type="ChEBI" id="CHEBI:30616"/>
    </ligand>
</feature>
<feature type="binding site" evidence="1">
    <location>
        <position position="159"/>
    </location>
    <ligand>
        <name>substrate</name>
    </ligand>
</feature>
<organism>
    <name type="scientific">Bartonella henselae (strain ATCC 49882 / DSM 28221 / CCUG 30454 / Houston 1)</name>
    <name type="common">Rochalimaea henselae</name>
    <dbReference type="NCBI Taxonomy" id="283166"/>
    <lineage>
        <taxon>Bacteria</taxon>
        <taxon>Pseudomonadati</taxon>
        <taxon>Pseudomonadota</taxon>
        <taxon>Alphaproteobacteria</taxon>
        <taxon>Hyphomicrobiales</taxon>
        <taxon>Bartonellaceae</taxon>
        <taxon>Bartonella</taxon>
    </lineage>
</organism>
<reference key="1">
    <citation type="journal article" date="2004" name="Proc. Natl. Acad. Sci. U.S.A.">
        <title>The louse-borne human pathogen Bartonella quintana is a genomic derivative of the zoonotic agent Bartonella henselae.</title>
        <authorList>
            <person name="Alsmark U.C.M."/>
            <person name="Frank A.C."/>
            <person name="Karlberg E.O."/>
            <person name="Legault B.-A."/>
            <person name="Ardell D.H."/>
            <person name="Canbaeck B."/>
            <person name="Eriksson A.-S."/>
            <person name="Naeslund A.K."/>
            <person name="Handley S.A."/>
            <person name="Huvet M."/>
            <person name="La Scola B."/>
            <person name="Holmberg M."/>
            <person name="Andersson S.G.E."/>
        </authorList>
    </citation>
    <scope>NUCLEOTIDE SEQUENCE [LARGE SCALE GENOMIC DNA]</scope>
    <source>
        <strain>ATCC 49882 / DSM 28221 / CCUG 30454 / Houston 1</strain>
    </source>
</reference>
<sequence>MKSNRPKHIPITKIKNQLLSSLDNRALVLIGLMGVGKSVIGKRIATMLCLPFYDSDQEIEKAAQMTITELFKTYGESEFRALEQRVILNLMKNRPLVLATGGGAYINEDIRKAVHKNGISIWLKVDLDTLMQRVSKRPTRPLLQTENPKETMQKLMKQRYPIYAKANLTINSHKENRQTVAQNVIRSVQHYLDTEKNDRNNQHANQNCHC</sequence>
<evidence type="ECO:0000255" key="1">
    <source>
        <dbReference type="HAMAP-Rule" id="MF_00109"/>
    </source>
</evidence>
<comment type="function">
    <text evidence="1">Catalyzes the specific phosphorylation of the 3-hydroxyl group of shikimic acid using ATP as a cosubstrate.</text>
</comment>
<comment type="catalytic activity">
    <reaction evidence="1">
        <text>shikimate + ATP = 3-phosphoshikimate + ADP + H(+)</text>
        <dbReference type="Rhea" id="RHEA:13121"/>
        <dbReference type="ChEBI" id="CHEBI:15378"/>
        <dbReference type="ChEBI" id="CHEBI:30616"/>
        <dbReference type="ChEBI" id="CHEBI:36208"/>
        <dbReference type="ChEBI" id="CHEBI:145989"/>
        <dbReference type="ChEBI" id="CHEBI:456216"/>
        <dbReference type="EC" id="2.7.1.71"/>
    </reaction>
</comment>
<comment type="cofactor">
    <cofactor evidence="1">
        <name>Mg(2+)</name>
        <dbReference type="ChEBI" id="CHEBI:18420"/>
    </cofactor>
    <text evidence="1">Binds 1 Mg(2+) ion per subunit.</text>
</comment>
<comment type="pathway">
    <text evidence="1">Metabolic intermediate biosynthesis; chorismate biosynthesis; chorismate from D-erythrose 4-phosphate and phosphoenolpyruvate: step 5/7.</text>
</comment>
<comment type="subunit">
    <text evidence="1">Monomer.</text>
</comment>
<comment type="subcellular location">
    <subcellularLocation>
        <location evidence="1">Cytoplasm</location>
    </subcellularLocation>
</comment>
<comment type="similarity">
    <text evidence="1">Belongs to the shikimate kinase family.</text>
</comment>
<accession>Q6G1N9</accession>
<dbReference type="EC" id="2.7.1.71" evidence="1"/>
<dbReference type="EMBL" id="BX897699">
    <property type="protein sequence ID" value="CAF28398.1"/>
    <property type="molecule type" value="Genomic_DNA"/>
</dbReference>
<dbReference type="RefSeq" id="WP_011181398.1">
    <property type="nucleotide sequence ID" value="NZ_LRIJ02000001.1"/>
</dbReference>
<dbReference type="SMR" id="Q6G1N9"/>
<dbReference type="PaxDb" id="283166-BH16360"/>
<dbReference type="EnsemblBacteria" id="CAF28398">
    <property type="protein sequence ID" value="CAF28398"/>
    <property type="gene ID" value="BH16360"/>
</dbReference>
<dbReference type="KEGG" id="bhe:BH16360"/>
<dbReference type="eggNOG" id="COG0703">
    <property type="taxonomic scope" value="Bacteria"/>
</dbReference>
<dbReference type="OrthoDB" id="9800332at2"/>
<dbReference type="UniPathway" id="UPA00053">
    <property type="reaction ID" value="UER00088"/>
</dbReference>
<dbReference type="Proteomes" id="UP000000421">
    <property type="component" value="Chromosome"/>
</dbReference>
<dbReference type="GO" id="GO:0005829">
    <property type="term" value="C:cytosol"/>
    <property type="evidence" value="ECO:0007669"/>
    <property type="project" value="TreeGrafter"/>
</dbReference>
<dbReference type="GO" id="GO:0005524">
    <property type="term" value="F:ATP binding"/>
    <property type="evidence" value="ECO:0007669"/>
    <property type="project" value="UniProtKB-UniRule"/>
</dbReference>
<dbReference type="GO" id="GO:0000287">
    <property type="term" value="F:magnesium ion binding"/>
    <property type="evidence" value="ECO:0007669"/>
    <property type="project" value="UniProtKB-UniRule"/>
</dbReference>
<dbReference type="GO" id="GO:0004765">
    <property type="term" value="F:shikimate kinase activity"/>
    <property type="evidence" value="ECO:0007669"/>
    <property type="project" value="UniProtKB-UniRule"/>
</dbReference>
<dbReference type="GO" id="GO:0008652">
    <property type="term" value="P:amino acid biosynthetic process"/>
    <property type="evidence" value="ECO:0007669"/>
    <property type="project" value="UniProtKB-KW"/>
</dbReference>
<dbReference type="GO" id="GO:0009073">
    <property type="term" value="P:aromatic amino acid family biosynthetic process"/>
    <property type="evidence" value="ECO:0007669"/>
    <property type="project" value="UniProtKB-KW"/>
</dbReference>
<dbReference type="GO" id="GO:0009423">
    <property type="term" value="P:chorismate biosynthetic process"/>
    <property type="evidence" value="ECO:0007669"/>
    <property type="project" value="UniProtKB-UniRule"/>
</dbReference>
<dbReference type="CDD" id="cd00464">
    <property type="entry name" value="SK"/>
    <property type="match status" value="1"/>
</dbReference>
<dbReference type="Gene3D" id="3.40.50.300">
    <property type="entry name" value="P-loop containing nucleotide triphosphate hydrolases"/>
    <property type="match status" value="1"/>
</dbReference>
<dbReference type="HAMAP" id="MF_00109">
    <property type="entry name" value="Shikimate_kinase"/>
    <property type="match status" value="1"/>
</dbReference>
<dbReference type="InterPro" id="IPR027417">
    <property type="entry name" value="P-loop_NTPase"/>
</dbReference>
<dbReference type="InterPro" id="IPR031322">
    <property type="entry name" value="Shikimate/glucono_kinase"/>
</dbReference>
<dbReference type="InterPro" id="IPR000623">
    <property type="entry name" value="Shikimate_kinase/TSH1"/>
</dbReference>
<dbReference type="NCBIfam" id="NF010552">
    <property type="entry name" value="PRK13946.1"/>
    <property type="match status" value="1"/>
</dbReference>
<dbReference type="PANTHER" id="PTHR21087">
    <property type="entry name" value="SHIKIMATE KINASE"/>
    <property type="match status" value="1"/>
</dbReference>
<dbReference type="PANTHER" id="PTHR21087:SF16">
    <property type="entry name" value="SHIKIMATE KINASE 1, CHLOROPLASTIC"/>
    <property type="match status" value="1"/>
</dbReference>
<dbReference type="Pfam" id="PF01202">
    <property type="entry name" value="SKI"/>
    <property type="match status" value="1"/>
</dbReference>
<dbReference type="PRINTS" id="PR01100">
    <property type="entry name" value="SHIKIMTKNASE"/>
</dbReference>
<dbReference type="SUPFAM" id="SSF52540">
    <property type="entry name" value="P-loop containing nucleoside triphosphate hydrolases"/>
    <property type="match status" value="1"/>
</dbReference>
<proteinExistence type="inferred from homology"/>
<gene>
    <name evidence="1" type="primary">aroK</name>
    <name type="ordered locus">BH16360</name>
</gene>
<keyword id="KW-0028">Amino-acid biosynthesis</keyword>
<keyword id="KW-0057">Aromatic amino acid biosynthesis</keyword>
<keyword id="KW-0067">ATP-binding</keyword>
<keyword id="KW-0963">Cytoplasm</keyword>
<keyword id="KW-0418">Kinase</keyword>
<keyword id="KW-0460">Magnesium</keyword>
<keyword id="KW-0479">Metal-binding</keyword>
<keyword id="KW-0547">Nucleotide-binding</keyword>
<keyword id="KW-0808">Transferase</keyword>